<evidence type="ECO:0000255" key="1">
    <source>
        <dbReference type="HAMAP-Rule" id="MF_00368"/>
    </source>
</evidence>
<evidence type="ECO:0000305" key="2"/>
<gene>
    <name evidence="1" type="primary">rplL</name>
    <name type="ordered locus">lpg0321</name>
</gene>
<feature type="chain" id="PRO_0000243442" description="Large ribosomal subunit protein bL12">
    <location>
        <begin position="1"/>
        <end position="126"/>
    </location>
</feature>
<organism>
    <name type="scientific">Legionella pneumophila subsp. pneumophila (strain Philadelphia 1 / ATCC 33152 / DSM 7513)</name>
    <dbReference type="NCBI Taxonomy" id="272624"/>
    <lineage>
        <taxon>Bacteria</taxon>
        <taxon>Pseudomonadati</taxon>
        <taxon>Pseudomonadota</taxon>
        <taxon>Gammaproteobacteria</taxon>
        <taxon>Legionellales</taxon>
        <taxon>Legionellaceae</taxon>
        <taxon>Legionella</taxon>
    </lineage>
</organism>
<accession>Q5ZYQ1</accession>
<name>RL7_LEGPH</name>
<proteinExistence type="inferred from homology"/>
<reference key="1">
    <citation type="journal article" date="2004" name="Science">
        <title>The genomic sequence of the accidental pathogen Legionella pneumophila.</title>
        <authorList>
            <person name="Chien M."/>
            <person name="Morozova I."/>
            <person name="Shi S."/>
            <person name="Sheng H."/>
            <person name="Chen J."/>
            <person name="Gomez S.M."/>
            <person name="Asamani G."/>
            <person name="Hill K."/>
            <person name="Nuara J."/>
            <person name="Feder M."/>
            <person name="Rineer J."/>
            <person name="Greenberg J.J."/>
            <person name="Steshenko V."/>
            <person name="Park S.H."/>
            <person name="Zhao B."/>
            <person name="Teplitskaya E."/>
            <person name="Edwards J.R."/>
            <person name="Pampou S."/>
            <person name="Georghiou A."/>
            <person name="Chou I.-C."/>
            <person name="Iannuccilli W."/>
            <person name="Ulz M.E."/>
            <person name="Kim D.H."/>
            <person name="Geringer-Sameth A."/>
            <person name="Goldsberry C."/>
            <person name="Morozov P."/>
            <person name="Fischer S.G."/>
            <person name="Segal G."/>
            <person name="Qu X."/>
            <person name="Rzhetsky A."/>
            <person name="Zhang P."/>
            <person name="Cayanis E."/>
            <person name="De Jong P.J."/>
            <person name="Ju J."/>
            <person name="Kalachikov S."/>
            <person name="Shuman H.A."/>
            <person name="Russo J.J."/>
        </authorList>
    </citation>
    <scope>NUCLEOTIDE SEQUENCE [LARGE SCALE GENOMIC DNA]</scope>
    <source>
        <strain>Philadelphia 1 / ATCC 33152 / DSM 7513</strain>
    </source>
</reference>
<protein>
    <recommendedName>
        <fullName evidence="1">Large ribosomal subunit protein bL12</fullName>
    </recommendedName>
    <alternativeName>
        <fullName evidence="2">50S ribosomal protein L7/L12</fullName>
    </alternativeName>
</protein>
<dbReference type="EMBL" id="AE017354">
    <property type="protein sequence ID" value="AAU26418.1"/>
    <property type="molecule type" value="Genomic_DNA"/>
</dbReference>
<dbReference type="RefSeq" id="WP_010946072.1">
    <property type="nucleotide sequence ID" value="NC_002942.5"/>
</dbReference>
<dbReference type="RefSeq" id="YP_094365.1">
    <property type="nucleotide sequence ID" value="NC_002942.5"/>
</dbReference>
<dbReference type="SMR" id="Q5ZYQ1"/>
<dbReference type="STRING" id="272624.lpg0321"/>
<dbReference type="PaxDb" id="272624-lpg0321"/>
<dbReference type="GeneID" id="57034324"/>
<dbReference type="KEGG" id="lpn:lpg0321"/>
<dbReference type="PATRIC" id="fig|272624.6.peg.328"/>
<dbReference type="eggNOG" id="COG0222">
    <property type="taxonomic scope" value="Bacteria"/>
</dbReference>
<dbReference type="HOGENOM" id="CLU_086499_3_2_6"/>
<dbReference type="OrthoDB" id="9811748at2"/>
<dbReference type="Proteomes" id="UP000000609">
    <property type="component" value="Chromosome"/>
</dbReference>
<dbReference type="GO" id="GO:0022625">
    <property type="term" value="C:cytosolic large ribosomal subunit"/>
    <property type="evidence" value="ECO:0007669"/>
    <property type="project" value="TreeGrafter"/>
</dbReference>
<dbReference type="GO" id="GO:0003729">
    <property type="term" value="F:mRNA binding"/>
    <property type="evidence" value="ECO:0007669"/>
    <property type="project" value="TreeGrafter"/>
</dbReference>
<dbReference type="GO" id="GO:0003735">
    <property type="term" value="F:structural constituent of ribosome"/>
    <property type="evidence" value="ECO:0007669"/>
    <property type="project" value="InterPro"/>
</dbReference>
<dbReference type="GO" id="GO:0006412">
    <property type="term" value="P:translation"/>
    <property type="evidence" value="ECO:0007669"/>
    <property type="project" value="UniProtKB-UniRule"/>
</dbReference>
<dbReference type="CDD" id="cd00387">
    <property type="entry name" value="Ribosomal_L7_L12"/>
    <property type="match status" value="1"/>
</dbReference>
<dbReference type="FunFam" id="3.30.1390.10:FF:000001">
    <property type="entry name" value="50S ribosomal protein L7/L12"/>
    <property type="match status" value="1"/>
</dbReference>
<dbReference type="Gene3D" id="3.30.1390.10">
    <property type="match status" value="1"/>
</dbReference>
<dbReference type="Gene3D" id="1.20.5.710">
    <property type="entry name" value="Single helix bin"/>
    <property type="match status" value="1"/>
</dbReference>
<dbReference type="HAMAP" id="MF_00368">
    <property type="entry name" value="Ribosomal_bL12"/>
    <property type="match status" value="1"/>
</dbReference>
<dbReference type="InterPro" id="IPR000206">
    <property type="entry name" value="Ribosomal_bL12"/>
</dbReference>
<dbReference type="InterPro" id="IPR013823">
    <property type="entry name" value="Ribosomal_bL12_C"/>
</dbReference>
<dbReference type="InterPro" id="IPR014719">
    <property type="entry name" value="Ribosomal_bL12_C/ClpS-like"/>
</dbReference>
<dbReference type="InterPro" id="IPR008932">
    <property type="entry name" value="Ribosomal_bL12_oligo"/>
</dbReference>
<dbReference type="InterPro" id="IPR036235">
    <property type="entry name" value="Ribosomal_bL12_oligo_N_sf"/>
</dbReference>
<dbReference type="NCBIfam" id="TIGR00855">
    <property type="entry name" value="L12"/>
    <property type="match status" value="1"/>
</dbReference>
<dbReference type="PANTHER" id="PTHR45987">
    <property type="entry name" value="39S RIBOSOMAL PROTEIN L12"/>
    <property type="match status" value="1"/>
</dbReference>
<dbReference type="PANTHER" id="PTHR45987:SF4">
    <property type="entry name" value="LARGE RIBOSOMAL SUBUNIT PROTEIN BL12M"/>
    <property type="match status" value="1"/>
</dbReference>
<dbReference type="Pfam" id="PF00542">
    <property type="entry name" value="Ribosomal_L12"/>
    <property type="match status" value="1"/>
</dbReference>
<dbReference type="Pfam" id="PF16320">
    <property type="entry name" value="Ribosomal_L12_N"/>
    <property type="match status" value="1"/>
</dbReference>
<dbReference type="SUPFAM" id="SSF54736">
    <property type="entry name" value="ClpS-like"/>
    <property type="match status" value="1"/>
</dbReference>
<dbReference type="SUPFAM" id="SSF48300">
    <property type="entry name" value="Ribosomal protein L7/12, oligomerisation (N-terminal) domain"/>
    <property type="match status" value="1"/>
</dbReference>
<comment type="function">
    <text evidence="1">Forms part of the ribosomal stalk which helps the ribosome interact with GTP-bound translation factors. Is thus essential for accurate translation.</text>
</comment>
<comment type="subunit">
    <text evidence="1">Homodimer. Part of the ribosomal stalk of the 50S ribosomal subunit. Forms a multimeric L10(L12)X complex, where L10 forms an elongated spine to which 2 to 4 L12 dimers bind in a sequential fashion. Binds GTP-bound translation factors.</text>
</comment>
<comment type="similarity">
    <text evidence="1">Belongs to the bacterial ribosomal protein bL12 family.</text>
</comment>
<sequence length="126" mass="12911">MAVSKNEILETISNMTVMEVVELIEAMEEKFNVSAAAAAVAVAAPAAGAGAAAAEEQTEFTVVMTSFGSNKVNVIKAIRGITGLGLKEAKDLVEGAPSTVKEGVSKDEAASIKKELEEAGATVEVK</sequence>
<keyword id="KW-1185">Reference proteome</keyword>
<keyword id="KW-0687">Ribonucleoprotein</keyword>
<keyword id="KW-0689">Ribosomal protein</keyword>